<dbReference type="EC" id="6.1.1.3" evidence="1"/>
<dbReference type="EMBL" id="CP000847">
    <property type="protein sequence ID" value="ABV74639.1"/>
    <property type="molecule type" value="Genomic_DNA"/>
</dbReference>
<dbReference type="RefSeq" id="WP_012149273.1">
    <property type="nucleotide sequence ID" value="NC_009881.1"/>
</dbReference>
<dbReference type="SMR" id="A8GML4"/>
<dbReference type="STRING" id="293614.A1C_01640"/>
<dbReference type="KEGG" id="rak:A1C_01640"/>
<dbReference type="eggNOG" id="COG0441">
    <property type="taxonomic scope" value="Bacteria"/>
</dbReference>
<dbReference type="HOGENOM" id="CLU_008554_0_1_5"/>
<dbReference type="Proteomes" id="UP000006830">
    <property type="component" value="Chromosome"/>
</dbReference>
<dbReference type="GO" id="GO:0005737">
    <property type="term" value="C:cytoplasm"/>
    <property type="evidence" value="ECO:0007669"/>
    <property type="project" value="UniProtKB-SubCell"/>
</dbReference>
<dbReference type="GO" id="GO:0005524">
    <property type="term" value="F:ATP binding"/>
    <property type="evidence" value="ECO:0007669"/>
    <property type="project" value="UniProtKB-UniRule"/>
</dbReference>
<dbReference type="GO" id="GO:0046872">
    <property type="term" value="F:metal ion binding"/>
    <property type="evidence" value="ECO:0007669"/>
    <property type="project" value="UniProtKB-KW"/>
</dbReference>
<dbReference type="GO" id="GO:0004829">
    <property type="term" value="F:threonine-tRNA ligase activity"/>
    <property type="evidence" value="ECO:0007669"/>
    <property type="project" value="UniProtKB-UniRule"/>
</dbReference>
<dbReference type="GO" id="GO:0000049">
    <property type="term" value="F:tRNA binding"/>
    <property type="evidence" value="ECO:0007669"/>
    <property type="project" value="UniProtKB-KW"/>
</dbReference>
<dbReference type="GO" id="GO:0006435">
    <property type="term" value="P:threonyl-tRNA aminoacylation"/>
    <property type="evidence" value="ECO:0007669"/>
    <property type="project" value="UniProtKB-UniRule"/>
</dbReference>
<dbReference type="CDD" id="cd01667">
    <property type="entry name" value="TGS_ThrRS"/>
    <property type="match status" value="1"/>
</dbReference>
<dbReference type="CDD" id="cd00860">
    <property type="entry name" value="ThrRS_anticodon"/>
    <property type="match status" value="1"/>
</dbReference>
<dbReference type="CDD" id="cd00771">
    <property type="entry name" value="ThrRS_core"/>
    <property type="match status" value="1"/>
</dbReference>
<dbReference type="FunFam" id="3.10.20.30:FF:000005">
    <property type="entry name" value="Threonine--tRNA ligase"/>
    <property type="match status" value="1"/>
</dbReference>
<dbReference type="FunFam" id="3.30.54.20:FF:000002">
    <property type="entry name" value="Threonine--tRNA ligase"/>
    <property type="match status" value="1"/>
</dbReference>
<dbReference type="FunFam" id="3.30.930.10:FF:000002">
    <property type="entry name" value="Threonine--tRNA ligase"/>
    <property type="match status" value="1"/>
</dbReference>
<dbReference type="FunFam" id="3.40.50.800:FF:000001">
    <property type="entry name" value="Threonine--tRNA ligase"/>
    <property type="match status" value="1"/>
</dbReference>
<dbReference type="FunFam" id="3.30.980.10:FF:000005">
    <property type="entry name" value="Threonyl-tRNA synthetase, mitochondrial"/>
    <property type="match status" value="1"/>
</dbReference>
<dbReference type="Gene3D" id="3.10.20.30">
    <property type="match status" value="1"/>
</dbReference>
<dbReference type="Gene3D" id="3.30.54.20">
    <property type="match status" value="1"/>
</dbReference>
<dbReference type="Gene3D" id="3.40.50.800">
    <property type="entry name" value="Anticodon-binding domain"/>
    <property type="match status" value="1"/>
</dbReference>
<dbReference type="Gene3D" id="3.30.930.10">
    <property type="entry name" value="Bira Bifunctional Protein, Domain 2"/>
    <property type="match status" value="1"/>
</dbReference>
<dbReference type="Gene3D" id="3.30.980.10">
    <property type="entry name" value="Threonyl-trna Synthetase, Chain A, domain 2"/>
    <property type="match status" value="1"/>
</dbReference>
<dbReference type="HAMAP" id="MF_00184">
    <property type="entry name" value="Thr_tRNA_synth"/>
    <property type="match status" value="1"/>
</dbReference>
<dbReference type="InterPro" id="IPR002314">
    <property type="entry name" value="aa-tRNA-synt_IIb"/>
</dbReference>
<dbReference type="InterPro" id="IPR006195">
    <property type="entry name" value="aa-tRNA-synth_II"/>
</dbReference>
<dbReference type="InterPro" id="IPR045864">
    <property type="entry name" value="aa-tRNA-synth_II/BPL/LPL"/>
</dbReference>
<dbReference type="InterPro" id="IPR004154">
    <property type="entry name" value="Anticodon-bd"/>
</dbReference>
<dbReference type="InterPro" id="IPR036621">
    <property type="entry name" value="Anticodon-bd_dom_sf"/>
</dbReference>
<dbReference type="InterPro" id="IPR012675">
    <property type="entry name" value="Beta-grasp_dom_sf"/>
</dbReference>
<dbReference type="InterPro" id="IPR004095">
    <property type="entry name" value="TGS"/>
</dbReference>
<dbReference type="InterPro" id="IPR012676">
    <property type="entry name" value="TGS-like"/>
</dbReference>
<dbReference type="InterPro" id="IPR002320">
    <property type="entry name" value="Thr-tRNA-ligase_IIa"/>
</dbReference>
<dbReference type="InterPro" id="IPR018163">
    <property type="entry name" value="Thr/Ala-tRNA-synth_IIc_edit"/>
</dbReference>
<dbReference type="InterPro" id="IPR047246">
    <property type="entry name" value="ThrRS_anticodon"/>
</dbReference>
<dbReference type="InterPro" id="IPR033728">
    <property type="entry name" value="ThrRS_core"/>
</dbReference>
<dbReference type="InterPro" id="IPR012947">
    <property type="entry name" value="tRNA_SAD"/>
</dbReference>
<dbReference type="NCBIfam" id="TIGR00418">
    <property type="entry name" value="thrS"/>
    <property type="match status" value="1"/>
</dbReference>
<dbReference type="PANTHER" id="PTHR11451:SF44">
    <property type="entry name" value="THREONINE--TRNA LIGASE, CHLOROPLASTIC_MITOCHONDRIAL 2"/>
    <property type="match status" value="1"/>
</dbReference>
<dbReference type="PANTHER" id="PTHR11451">
    <property type="entry name" value="THREONINE-TRNA LIGASE"/>
    <property type="match status" value="1"/>
</dbReference>
<dbReference type="Pfam" id="PF03129">
    <property type="entry name" value="HGTP_anticodon"/>
    <property type="match status" value="1"/>
</dbReference>
<dbReference type="Pfam" id="PF02824">
    <property type="entry name" value="TGS"/>
    <property type="match status" value="1"/>
</dbReference>
<dbReference type="Pfam" id="PF00587">
    <property type="entry name" value="tRNA-synt_2b"/>
    <property type="match status" value="1"/>
</dbReference>
<dbReference type="Pfam" id="PF07973">
    <property type="entry name" value="tRNA_SAD"/>
    <property type="match status" value="1"/>
</dbReference>
<dbReference type="PRINTS" id="PR01047">
    <property type="entry name" value="TRNASYNTHTHR"/>
</dbReference>
<dbReference type="SMART" id="SM00863">
    <property type="entry name" value="tRNA_SAD"/>
    <property type="match status" value="1"/>
</dbReference>
<dbReference type="SUPFAM" id="SSF52954">
    <property type="entry name" value="Class II aaRS ABD-related"/>
    <property type="match status" value="1"/>
</dbReference>
<dbReference type="SUPFAM" id="SSF55681">
    <property type="entry name" value="Class II aaRS and biotin synthetases"/>
    <property type="match status" value="1"/>
</dbReference>
<dbReference type="SUPFAM" id="SSF81271">
    <property type="entry name" value="TGS-like"/>
    <property type="match status" value="1"/>
</dbReference>
<dbReference type="SUPFAM" id="SSF55186">
    <property type="entry name" value="ThrRS/AlaRS common domain"/>
    <property type="match status" value="1"/>
</dbReference>
<dbReference type="PROSITE" id="PS50862">
    <property type="entry name" value="AA_TRNA_LIGASE_II"/>
    <property type="match status" value="1"/>
</dbReference>
<dbReference type="PROSITE" id="PS51880">
    <property type="entry name" value="TGS"/>
    <property type="match status" value="1"/>
</dbReference>
<name>SYT_RICAH</name>
<sequence length="635" mass="72689">MINISFPDGSVRQFENDITAYEVANAISMSLAKAAMVAEINGELKDLSTVIENDCKLRILTAKDSECLEIIRHDAAHIIAEAAKELFPDIQVTIGPAIENGFFYDFAKDKPFTPDDVAMIEARMHEIVKRNEQITRELWNRDKAIEFFKSIGEHYKAEIIASIPAGEQITLYRQGNFIDLCRGPHAPSTGFVKHFKLMKVAGAYWRGDSRNEMLQRIYGTAWATKEQLDNYLLMLEEAEKRDHRKLGKELDLFHFQEEAQGMVFWHDKGWSIYNTIEQYIRKKIRKNGYTEVKTPVLVDKSLWEASGHWEKFRDDMFALDTDDKTLALKPMNCPCHVQIFKQGIKSYRDLPLRMSEFGLCHRNEASGALHGLMRVRSLVQDDAHIFCTEEQITDETVSFCKLLTEVYKDFGFTNISVKFSDRPEVRAGSNGTWDKAENALKEAVEKAGFTYTLNPGEGAFYGPKLEFVLTDAIGRQWQCGTLQMDFVLPERLDASYIAASGEKKRPVMLHRAILGSLERFIGILIEEYAGCFPLWLAPIQVAIATITSDLNDYALEVQKALIDNGVRTDINISPDKINYKIREFYNQKIPMIAVIGKQEQENKQVTIRRLRTTEQEVLSLEQLITLIKEENEKYL</sequence>
<accession>A8GML4</accession>
<comment type="function">
    <text evidence="1">Catalyzes the attachment of threonine to tRNA(Thr) in a two-step reaction: L-threonine is first activated by ATP to form Thr-AMP and then transferred to the acceptor end of tRNA(Thr). Also edits incorrectly charged L-seryl-tRNA(Thr).</text>
</comment>
<comment type="catalytic activity">
    <reaction evidence="1">
        <text>tRNA(Thr) + L-threonine + ATP = L-threonyl-tRNA(Thr) + AMP + diphosphate + H(+)</text>
        <dbReference type="Rhea" id="RHEA:24624"/>
        <dbReference type="Rhea" id="RHEA-COMP:9670"/>
        <dbReference type="Rhea" id="RHEA-COMP:9704"/>
        <dbReference type="ChEBI" id="CHEBI:15378"/>
        <dbReference type="ChEBI" id="CHEBI:30616"/>
        <dbReference type="ChEBI" id="CHEBI:33019"/>
        <dbReference type="ChEBI" id="CHEBI:57926"/>
        <dbReference type="ChEBI" id="CHEBI:78442"/>
        <dbReference type="ChEBI" id="CHEBI:78534"/>
        <dbReference type="ChEBI" id="CHEBI:456215"/>
        <dbReference type="EC" id="6.1.1.3"/>
    </reaction>
</comment>
<comment type="cofactor">
    <cofactor evidence="1">
        <name>Zn(2+)</name>
        <dbReference type="ChEBI" id="CHEBI:29105"/>
    </cofactor>
    <text evidence="1">Binds 1 zinc ion per subunit.</text>
</comment>
<comment type="subunit">
    <text evidence="1">Homodimer.</text>
</comment>
<comment type="subcellular location">
    <subcellularLocation>
        <location evidence="1">Cytoplasm</location>
    </subcellularLocation>
</comment>
<comment type="similarity">
    <text evidence="1">Belongs to the class-II aminoacyl-tRNA synthetase family.</text>
</comment>
<reference key="1">
    <citation type="submission" date="2007-09" db="EMBL/GenBank/DDBJ databases">
        <title>Complete genome sequence of Rickettsia akari.</title>
        <authorList>
            <person name="Madan A."/>
            <person name="Fahey J."/>
            <person name="Helton E."/>
            <person name="Ketteman M."/>
            <person name="Madan A."/>
            <person name="Rodrigues S."/>
            <person name="Sanchez A."/>
            <person name="Whiting M."/>
            <person name="Dasch G."/>
            <person name="Eremeeva M."/>
        </authorList>
    </citation>
    <scope>NUCLEOTIDE SEQUENCE [LARGE SCALE GENOMIC DNA]</scope>
    <source>
        <strain>Hartford</strain>
    </source>
</reference>
<feature type="chain" id="PRO_1000020493" description="Threonine--tRNA ligase">
    <location>
        <begin position="1"/>
        <end position="635"/>
    </location>
</feature>
<feature type="domain" description="TGS" evidence="2">
    <location>
        <begin position="1"/>
        <end position="61"/>
    </location>
</feature>
<feature type="region of interest" description="Catalytic" evidence="1">
    <location>
        <begin position="242"/>
        <end position="533"/>
    </location>
</feature>
<feature type="binding site" evidence="1">
    <location>
        <position position="333"/>
    </location>
    <ligand>
        <name>Zn(2+)</name>
        <dbReference type="ChEBI" id="CHEBI:29105"/>
    </ligand>
</feature>
<feature type="binding site" evidence="1">
    <location>
        <position position="384"/>
    </location>
    <ligand>
        <name>Zn(2+)</name>
        <dbReference type="ChEBI" id="CHEBI:29105"/>
    </ligand>
</feature>
<feature type="binding site" evidence="1">
    <location>
        <position position="510"/>
    </location>
    <ligand>
        <name>Zn(2+)</name>
        <dbReference type="ChEBI" id="CHEBI:29105"/>
    </ligand>
</feature>
<proteinExistence type="inferred from homology"/>
<protein>
    <recommendedName>
        <fullName evidence="1">Threonine--tRNA ligase</fullName>
        <ecNumber evidence="1">6.1.1.3</ecNumber>
    </recommendedName>
    <alternativeName>
        <fullName evidence="1">Threonyl-tRNA synthetase</fullName>
        <shortName evidence="1">ThrRS</shortName>
    </alternativeName>
</protein>
<organism>
    <name type="scientific">Rickettsia akari (strain Hartford)</name>
    <dbReference type="NCBI Taxonomy" id="293614"/>
    <lineage>
        <taxon>Bacteria</taxon>
        <taxon>Pseudomonadati</taxon>
        <taxon>Pseudomonadota</taxon>
        <taxon>Alphaproteobacteria</taxon>
        <taxon>Rickettsiales</taxon>
        <taxon>Rickettsiaceae</taxon>
        <taxon>Rickettsieae</taxon>
        <taxon>Rickettsia</taxon>
        <taxon>spotted fever group</taxon>
    </lineage>
</organism>
<evidence type="ECO:0000255" key="1">
    <source>
        <dbReference type="HAMAP-Rule" id="MF_00184"/>
    </source>
</evidence>
<evidence type="ECO:0000255" key="2">
    <source>
        <dbReference type="PROSITE-ProRule" id="PRU01228"/>
    </source>
</evidence>
<gene>
    <name evidence="1" type="primary">thrS</name>
    <name type="ordered locus">A1C_01640</name>
</gene>
<keyword id="KW-0030">Aminoacyl-tRNA synthetase</keyword>
<keyword id="KW-0067">ATP-binding</keyword>
<keyword id="KW-0963">Cytoplasm</keyword>
<keyword id="KW-0436">Ligase</keyword>
<keyword id="KW-0479">Metal-binding</keyword>
<keyword id="KW-0547">Nucleotide-binding</keyword>
<keyword id="KW-0648">Protein biosynthesis</keyword>
<keyword id="KW-0694">RNA-binding</keyword>
<keyword id="KW-0820">tRNA-binding</keyword>
<keyword id="KW-0862">Zinc</keyword>